<keyword id="KW-0150">Chloroplast</keyword>
<keyword id="KW-0507">mRNA processing</keyword>
<keyword id="KW-0934">Plastid</keyword>
<keyword id="KW-0694">RNA-binding</keyword>
<keyword id="KW-0819">tRNA processing</keyword>
<sequence length="506" mass="61005">MKEYRVYLERARSRQQDFLYPLIFREYIYGLAYSHNFNKSIFVENGGYDNKYSLLNVKRLITRMYQQNHLIISANDSNKNPFLGYNNNFYSQIISEGFAIVVEIPFFLQLSSSLEEAEIIKSYKNLRSIHSVFPFLEDKFTYLNYVSDIRIPYPIHLEILVQILRYWVKDVPFFHLLRVFLYHFCNWNCFIPTKKSISTFSKSNPRLFLFLYNFYVCEYESIFLFLRNKSYHLRLKSFSVFFERIFFYAKREHLVEVFSKDFSYTLPFFKDPNIHYVRYQGKCILASKNVPFLMNKWKYYFIHLWQCFFDVWSQPRTININQLSEHSFQLLGYFSNVRLNRSVVRSQMLENTFLIEIVSKKLDIIVPIIPLIRSLAKAKFCNVLGHPISKPVWADSSDFDIIERFLRICRNLSHYYNGSSKKKSLYRIKYILRLSCIKTLACKHKSTVRAFLKRSGSEELLEEFFTEEEEILSLIFPRDSFTLHRFHRNRIWYLDILFSNDLVNDE</sequence>
<name>MATK_TRIMI</name>
<gene>
    <name evidence="1" type="primary">matK</name>
</gene>
<accession>Q8MCM7</accession>
<evidence type="ECO:0000255" key="1">
    <source>
        <dbReference type="HAMAP-Rule" id="MF_01390"/>
    </source>
</evidence>
<dbReference type="EMBL" id="AF522128">
    <property type="protein sequence ID" value="AAM82120.1"/>
    <property type="molecule type" value="Genomic_DNA"/>
</dbReference>
<dbReference type="GO" id="GO:0009507">
    <property type="term" value="C:chloroplast"/>
    <property type="evidence" value="ECO:0007669"/>
    <property type="project" value="UniProtKB-SubCell"/>
</dbReference>
<dbReference type="GO" id="GO:0003723">
    <property type="term" value="F:RNA binding"/>
    <property type="evidence" value="ECO:0007669"/>
    <property type="project" value="UniProtKB-KW"/>
</dbReference>
<dbReference type="GO" id="GO:0006397">
    <property type="term" value="P:mRNA processing"/>
    <property type="evidence" value="ECO:0007669"/>
    <property type="project" value="UniProtKB-KW"/>
</dbReference>
<dbReference type="GO" id="GO:0008380">
    <property type="term" value="P:RNA splicing"/>
    <property type="evidence" value="ECO:0007669"/>
    <property type="project" value="UniProtKB-UniRule"/>
</dbReference>
<dbReference type="GO" id="GO:0008033">
    <property type="term" value="P:tRNA processing"/>
    <property type="evidence" value="ECO:0007669"/>
    <property type="project" value="UniProtKB-KW"/>
</dbReference>
<dbReference type="HAMAP" id="MF_01390">
    <property type="entry name" value="MatK"/>
    <property type="match status" value="1"/>
</dbReference>
<dbReference type="InterPro" id="IPR024937">
    <property type="entry name" value="Domain_X"/>
</dbReference>
<dbReference type="InterPro" id="IPR002866">
    <property type="entry name" value="Maturase_MatK"/>
</dbReference>
<dbReference type="InterPro" id="IPR024942">
    <property type="entry name" value="Maturase_MatK_N"/>
</dbReference>
<dbReference type="PANTHER" id="PTHR34811">
    <property type="entry name" value="MATURASE K"/>
    <property type="match status" value="1"/>
</dbReference>
<dbReference type="PANTHER" id="PTHR34811:SF1">
    <property type="entry name" value="MATURASE K"/>
    <property type="match status" value="1"/>
</dbReference>
<dbReference type="Pfam" id="PF01348">
    <property type="entry name" value="Intron_maturas2"/>
    <property type="match status" value="1"/>
</dbReference>
<dbReference type="Pfam" id="PF01824">
    <property type="entry name" value="MatK_N"/>
    <property type="match status" value="1"/>
</dbReference>
<proteinExistence type="inferred from homology"/>
<feature type="chain" id="PRO_0000143750" description="Maturase K">
    <location>
        <begin position="1"/>
        <end position="506"/>
    </location>
</feature>
<reference key="1">
    <citation type="book" date="2003" name="Advances in legume systematics - part 10">
        <title>Phylogenetic analyses of tribes Trifolieae and Vicieae based on sequences of the plastid gene matK (Papilionoideae: Leguminosae).</title>
        <editorList>
            <person name="Klitgaard B.B."/>
            <person name="Bruneau A."/>
        </editorList>
        <authorList>
            <person name="Steele K.P."/>
            <person name="Wojciechowski M.F."/>
        </authorList>
    </citation>
    <scope>NUCLEOTIDE SEQUENCE [GENOMIC DNA]</scope>
</reference>
<protein>
    <recommendedName>
        <fullName evidence="1">Maturase K</fullName>
    </recommendedName>
    <alternativeName>
        <fullName evidence="1">Intron maturase</fullName>
    </alternativeName>
</protein>
<comment type="function">
    <text evidence="1">Usually encoded in the trnK tRNA gene intron. Probably assists in splicing its own and other chloroplast group II introns.</text>
</comment>
<comment type="subcellular location">
    <subcellularLocation>
        <location>Plastid</location>
        <location>Chloroplast</location>
    </subcellularLocation>
</comment>
<comment type="similarity">
    <text evidence="1">Belongs to the intron maturase 2 family. MatK subfamily.</text>
</comment>
<organism>
    <name type="scientific">Trifolium microcephalum</name>
    <name type="common">Small-head clover</name>
    <dbReference type="NCBI Taxonomy" id="200957"/>
    <lineage>
        <taxon>Eukaryota</taxon>
        <taxon>Viridiplantae</taxon>
        <taxon>Streptophyta</taxon>
        <taxon>Embryophyta</taxon>
        <taxon>Tracheophyta</taxon>
        <taxon>Spermatophyta</taxon>
        <taxon>Magnoliopsida</taxon>
        <taxon>eudicotyledons</taxon>
        <taxon>Gunneridae</taxon>
        <taxon>Pentapetalae</taxon>
        <taxon>rosids</taxon>
        <taxon>fabids</taxon>
        <taxon>Fabales</taxon>
        <taxon>Fabaceae</taxon>
        <taxon>Papilionoideae</taxon>
        <taxon>50 kb inversion clade</taxon>
        <taxon>NPAAA clade</taxon>
        <taxon>Hologalegina</taxon>
        <taxon>IRL clade</taxon>
        <taxon>Trifolieae</taxon>
        <taxon>Trifolium</taxon>
    </lineage>
</organism>
<geneLocation type="chloroplast"/>